<keyword id="KW-0008">Acetylcholine receptor inhibiting toxin</keyword>
<keyword id="KW-0903">Direct protein sequencing</keyword>
<keyword id="KW-1015">Disulfide bond</keyword>
<keyword id="KW-0872">Ion channel impairing toxin</keyword>
<keyword id="KW-0528">Neurotoxin</keyword>
<keyword id="KW-0629">Postsynaptic neurotoxin</keyword>
<keyword id="KW-0964">Secreted</keyword>
<keyword id="KW-0800">Toxin</keyword>
<reference key="1">
    <citation type="journal article" date="1972" name="J. Biol. Chem.">
        <title>Snake venom toxins. The amino acid sequences of two toxins from Dendroaspis polylepis polylepis (black mamba) venom.</title>
        <authorList>
            <person name="Strydom D.J."/>
        </authorList>
    </citation>
    <scope>PROTEIN SEQUENCE</scope>
    <scope>TOXIC DOSE</scope>
    <scope>SUBCELLULAR LOCATION</scope>
    <source>
        <tissue>Venom</tissue>
    </source>
</reference>
<feature type="chain" id="PRO_0000093538" description="Alpha-elapitoxin-Dpp2a">
    <location>
        <begin position="1"/>
        <end position="72"/>
    </location>
</feature>
<feature type="disulfide bond" evidence="1">
    <location>
        <begin position="3"/>
        <end position="21"/>
    </location>
</feature>
<feature type="disulfide bond" evidence="1">
    <location>
        <begin position="14"/>
        <end position="42"/>
    </location>
</feature>
<feature type="disulfide bond" evidence="1">
    <location>
        <begin position="27"/>
        <end position="31"/>
    </location>
</feature>
<feature type="disulfide bond" evidence="1">
    <location>
        <begin position="46"/>
        <end position="57"/>
    </location>
</feature>
<feature type="disulfide bond" evidence="1">
    <location>
        <begin position="58"/>
        <end position="63"/>
    </location>
</feature>
<accession>P01396</accession>
<proteinExistence type="evidence at protein level"/>
<name>3L21_DENPO</name>
<sequence>RTCNKTFSDQSKICPPGENICYTKTWCDAWCSQRGKRVELGCAATCPKVKAGVEIKCCSTDDCDKFQFGKPR</sequence>
<dbReference type="PIR" id="A01667">
    <property type="entry name" value="N2EP1D"/>
</dbReference>
<dbReference type="SMR" id="P01396"/>
<dbReference type="EvolutionaryTrace" id="P01396"/>
<dbReference type="GO" id="GO:0005576">
    <property type="term" value="C:extracellular region"/>
    <property type="evidence" value="ECO:0007669"/>
    <property type="project" value="UniProtKB-SubCell"/>
</dbReference>
<dbReference type="GO" id="GO:0030550">
    <property type="term" value="F:acetylcholine receptor inhibitor activity"/>
    <property type="evidence" value="ECO:0007669"/>
    <property type="project" value="UniProtKB-KW"/>
</dbReference>
<dbReference type="GO" id="GO:0099106">
    <property type="term" value="F:ion channel regulator activity"/>
    <property type="evidence" value="ECO:0007669"/>
    <property type="project" value="UniProtKB-KW"/>
</dbReference>
<dbReference type="GO" id="GO:0090729">
    <property type="term" value="F:toxin activity"/>
    <property type="evidence" value="ECO:0007669"/>
    <property type="project" value="UniProtKB-KW"/>
</dbReference>
<dbReference type="CDD" id="cd00206">
    <property type="entry name" value="TFP_snake_toxin"/>
    <property type="match status" value="1"/>
</dbReference>
<dbReference type="Gene3D" id="2.10.60.10">
    <property type="entry name" value="CD59"/>
    <property type="match status" value="1"/>
</dbReference>
<dbReference type="InterPro" id="IPR003571">
    <property type="entry name" value="Snake_3FTx"/>
</dbReference>
<dbReference type="InterPro" id="IPR045860">
    <property type="entry name" value="Snake_toxin-like_sf"/>
</dbReference>
<dbReference type="InterPro" id="IPR018354">
    <property type="entry name" value="Snake_toxin_con_site"/>
</dbReference>
<dbReference type="InterPro" id="IPR054131">
    <property type="entry name" value="Toxin_cobra-type"/>
</dbReference>
<dbReference type="Pfam" id="PF21947">
    <property type="entry name" value="Toxin_cobra-type"/>
    <property type="match status" value="1"/>
</dbReference>
<dbReference type="SUPFAM" id="SSF57302">
    <property type="entry name" value="Snake toxin-like"/>
    <property type="match status" value="1"/>
</dbReference>
<dbReference type="PROSITE" id="PS00272">
    <property type="entry name" value="SNAKE_TOXIN"/>
    <property type="match status" value="1"/>
</dbReference>
<protein>
    <recommendedName>
        <fullName>Alpha-elapitoxin-Dpp2a</fullName>
        <shortName>Alpha-EPTX-Dpp2a</shortName>
    </recommendedName>
    <alternativeName>
        <fullName>Long neurotoxin 1</fullName>
    </alternativeName>
    <alternativeName>
        <fullName>Neurotoxin gamma</fullName>
    </alternativeName>
    <alternativeName>
        <fullName>Toxin VN1</fullName>
    </alternativeName>
</protein>
<evidence type="ECO:0000250" key="1"/>
<evidence type="ECO:0000250" key="2">
    <source>
        <dbReference type="UniProtKB" id="P60615"/>
    </source>
</evidence>
<evidence type="ECO:0000269" key="3">
    <source>
    </source>
</evidence>
<evidence type="ECO:0000305" key="4"/>
<comment type="function">
    <text evidence="2">Binds with high affinity to muscular (alpha-1/CHRNA1) and neuronal (alpha-7/CHRNA7) nicotinic acetylcholine receptor (nAChR) and inhibits acetylcholine from binding to the receptor, thereby impairing neuromuscular and neuronal transmission.</text>
</comment>
<comment type="subcellular location">
    <subcellularLocation>
        <location evidence="3">Secreted</location>
    </subcellularLocation>
</comment>
<comment type="tissue specificity">
    <text evidence="4">Expressed by the venom gland.</text>
</comment>
<comment type="toxic dose">
    <text evidence="3">LD(50) is 0.12 mg/kg by subcutaneous injection.</text>
</comment>
<comment type="similarity">
    <text evidence="4">Belongs to the three-finger toxin family. Long-chain subfamily. Type II alpha-neurotoxin sub-subfamily.</text>
</comment>
<organism>
    <name type="scientific">Dendroaspis polylepis polylepis</name>
    <name type="common">Black mamba</name>
    <dbReference type="NCBI Taxonomy" id="8620"/>
    <lineage>
        <taxon>Eukaryota</taxon>
        <taxon>Metazoa</taxon>
        <taxon>Chordata</taxon>
        <taxon>Craniata</taxon>
        <taxon>Vertebrata</taxon>
        <taxon>Euteleostomi</taxon>
        <taxon>Lepidosauria</taxon>
        <taxon>Squamata</taxon>
        <taxon>Bifurcata</taxon>
        <taxon>Unidentata</taxon>
        <taxon>Episquamata</taxon>
        <taxon>Toxicofera</taxon>
        <taxon>Serpentes</taxon>
        <taxon>Colubroidea</taxon>
        <taxon>Elapidae</taxon>
        <taxon>Elapinae</taxon>
        <taxon>Dendroaspis</taxon>
    </lineage>
</organism>